<dbReference type="EC" id="4.1.1.49" evidence="1"/>
<dbReference type="EMBL" id="CP001186">
    <property type="protein sequence ID" value="ACK97652.1"/>
    <property type="molecule type" value="Genomic_DNA"/>
</dbReference>
<dbReference type="RefSeq" id="WP_000108813.1">
    <property type="nucleotide sequence ID" value="NC_011772.1"/>
</dbReference>
<dbReference type="SMR" id="B7IL29"/>
<dbReference type="KEGG" id="bcg:BCG9842_B0361"/>
<dbReference type="HOGENOM" id="CLU_018247_0_1_9"/>
<dbReference type="UniPathway" id="UPA00138"/>
<dbReference type="Proteomes" id="UP000006744">
    <property type="component" value="Chromosome"/>
</dbReference>
<dbReference type="GO" id="GO:0005829">
    <property type="term" value="C:cytosol"/>
    <property type="evidence" value="ECO:0007669"/>
    <property type="project" value="TreeGrafter"/>
</dbReference>
<dbReference type="GO" id="GO:0005524">
    <property type="term" value="F:ATP binding"/>
    <property type="evidence" value="ECO:0007669"/>
    <property type="project" value="UniProtKB-UniRule"/>
</dbReference>
<dbReference type="GO" id="GO:0046872">
    <property type="term" value="F:metal ion binding"/>
    <property type="evidence" value="ECO:0007669"/>
    <property type="project" value="UniProtKB-KW"/>
</dbReference>
<dbReference type="GO" id="GO:0004612">
    <property type="term" value="F:phosphoenolpyruvate carboxykinase (ATP) activity"/>
    <property type="evidence" value="ECO:0007669"/>
    <property type="project" value="UniProtKB-UniRule"/>
</dbReference>
<dbReference type="GO" id="GO:0006094">
    <property type="term" value="P:gluconeogenesis"/>
    <property type="evidence" value="ECO:0007669"/>
    <property type="project" value="UniProtKB-UniRule"/>
</dbReference>
<dbReference type="CDD" id="cd00484">
    <property type="entry name" value="PEPCK_ATP"/>
    <property type="match status" value="1"/>
</dbReference>
<dbReference type="FunFam" id="2.170.8.10:FF:000001">
    <property type="entry name" value="Phosphoenolpyruvate carboxykinase (ATP)"/>
    <property type="match status" value="1"/>
</dbReference>
<dbReference type="FunFam" id="3.40.449.10:FF:000001">
    <property type="entry name" value="Phosphoenolpyruvate carboxykinase (ATP)"/>
    <property type="match status" value="1"/>
</dbReference>
<dbReference type="Gene3D" id="3.90.228.20">
    <property type="match status" value="1"/>
</dbReference>
<dbReference type="Gene3D" id="3.40.449.10">
    <property type="entry name" value="Phosphoenolpyruvate Carboxykinase, domain 1"/>
    <property type="match status" value="1"/>
</dbReference>
<dbReference type="Gene3D" id="2.170.8.10">
    <property type="entry name" value="Phosphoenolpyruvate Carboxykinase, domain 2"/>
    <property type="match status" value="1"/>
</dbReference>
<dbReference type="HAMAP" id="MF_00453">
    <property type="entry name" value="PEPCK_ATP"/>
    <property type="match status" value="1"/>
</dbReference>
<dbReference type="InterPro" id="IPR001272">
    <property type="entry name" value="PEP_carboxykinase_ATP"/>
</dbReference>
<dbReference type="InterPro" id="IPR013035">
    <property type="entry name" value="PEP_carboxykinase_C"/>
</dbReference>
<dbReference type="InterPro" id="IPR008210">
    <property type="entry name" value="PEP_carboxykinase_N"/>
</dbReference>
<dbReference type="InterPro" id="IPR015994">
    <property type="entry name" value="PEPCK_ATP_CS"/>
</dbReference>
<dbReference type="NCBIfam" id="TIGR00224">
    <property type="entry name" value="pckA"/>
    <property type="match status" value="1"/>
</dbReference>
<dbReference type="NCBIfam" id="NF006820">
    <property type="entry name" value="PRK09344.1-2"/>
    <property type="match status" value="1"/>
</dbReference>
<dbReference type="NCBIfam" id="NF006821">
    <property type="entry name" value="PRK09344.1-3"/>
    <property type="match status" value="1"/>
</dbReference>
<dbReference type="PANTHER" id="PTHR30031:SF0">
    <property type="entry name" value="PHOSPHOENOLPYRUVATE CARBOXYKINASE (ATP)"/>
    <property type="match status" value="1"/>
</dbReference>
<dbReference type="PANTHER" id="PTHR30031">
    <property type="entry name" value="PHOSPHOENOLPYRUVATE CARBOXYKINASE ATP"/>
    <property type="match status" value="1"/>
</dbReference>
<dbReference type="Pfam" id="PF01293">
    <property type="entry name" value="PEPCK_ATP"/>
    <property type="match status" value="1"/>
</dbReference>
<dbReference type="PIRSF" id="PIRSF006294">
    <property type="entry name" value="PEP_crbxkin"/>
    <property type="match status" value="1"/>
</dbReference>
<dbReference type="SUPFAM" id="SSF68923">
    <property type="entry name" value="PEP carboxykinase N-terminal domain"/>
    <property type="match status" value="1"/>
</dbReference>
<dbReference type="SUPFAM" id="SSF53795">
    <property type="entry name" value="PEP carboxykinase-like"/>
    <property type="match status" value="1"/>
</dbReference>
<dbReference type="PROSITE" id="PS00532">
    <property type="entry name" value="PEPCK_ATP"/>
    <property type="match status" value="1"/>
</dbReference>
<feature type="chain" id="PRO_1000125054" description="Phosphoenolpyruvate carboxykinase (ATP)">
    <location>
        <begin position="1"/>
        <end position="528"/>
    </location>
</feature>
<feature type="binding site" evidence="1">
    <location>
        <position position="56"/>
    </location>
    <ligand>
        <name>substrate</name>
    </ligand>
</feature>
<feature type="binding site" evidence="1">
    <location>
        <position position="192"/>
    </location>
    <ligand>
        <name>substrate</name>
    </ligand>
</feature>
<feature type="binding site" evidence="1">
    <location>
        <position position="198"/>
    </location>
    <ligand>
        <name>ATP</name>
        <dbReference type="ChEBI" id="CHEBI:30616"/>
    </ligand>
</feature>
<feature type="binding site" evidence="1">
    <location>
        <position position="198"/>
    </location>
    <ligand>
        <name>Mn(2+)</name>
        <dbReference type="ChEBI" id="CHEBI:29035"/>
    </ligand>
</feature>
<feature type="binding site" evidence="1">
    <location>
        <position position="198"/>
    </location>
    <ligand>
        <name>substrate</name>
    </ligand>
</feature>
<feature type="binding site" evidence="1">
    <location>
        <position position="217"/>
    </location>
    <ligand>
        <name>ATP</name>
        <dbReference type="ChEBI" id="CHEBI:30616"/>
    </ligand>
</feature>
<feature type="binding site" evidence="1">
    <location>
        <position position="217"/>
    </location>
    <ligand>
        <name>Mn(2+)</name>
        <dbReference type="ChEBI" id="CHEBI:29035"/>
    </ligand>
</feature>
<feature type="binding site" evidence="1">
    <location>
        <begin position="233"/>
        <end position="241"/>
    </location>
    <ligand>
        <name>ATP</name>
        <dbReference type="ChEBI" id="CHEBI:30616"/>
    </ligand>
</feature>
<feature type="binding site" evidence="1">
    <location>
        <position position="254"/>
    </location>
    <ligand>
        <name>Mn(2+)</name>
        <dbReference type="ChEBI" id="CHEBI:29035"/>
    </ligand>
</feature>
<feature type="binding site" evidence="1">
    <location>
        <position position="282"/>
    </location>
    <ligand>
        <name>ATP</name>
        <dbReference type="ChEBI" id="CHEBI:30616"/>
    </ligand>
</feature>
<feature type="binding site" evidence="1">
    <location>
        <position position="319"/>
    </location>
    <ligand>
        <name>ATP</name>
        <dbReference type="ChEBI" id="CHEBI:30616"/>
    </ligand>
</feature>
<feature type="binding site" evidence="1">
    <location>
        <position position="319"/>
    </location>
    <ligand>
        <name>substrate</name>
    </ligand>
</feature>
<feature type="binding site" evidence="1">
    <location>
        <position position="444"/>
    </location>
    <ligand>
        <name>ATP</name>
        <dbReference type="ChEBI" id="CHEBI:30616"/>
    </ligand>
</feature>
<reference key="1">
    <citation type="submission" date="2008-10" db="EMBL/GenBank/DDBJ databases">
        <title>Genome sequence of Bacillus cereus G9842.</title>
        <authorList>
            <person name="Dodson R.J."/>
            <person name="Durkin A.S."/>
            <person name="Rosovitz M.J."/>
            <person name="Rasko D.A."/>
            <person name="Hoffmaster A."/>
            <person name="Ravel J."/>
            <person name="Sutton G."/>
        </authorList>
    </citation>
    <scope>NUCLEOTIDE SEQUENCE [LARGE SCALE GENOMIC DNA]</scope>
    <source>
        <strain>G9842</strain>
    </source>
</reference>
<keyword id="KW-0067">ATP-binding</keyword>
<keyword id="KW-0963">Cytoplasm</keyword>
<keyword id="KW-0210">Decarboxylase</keyword>
<keyword id="KW-0312">Gluconeogenesis</keyword>
<keyword id="KW-0456">Lyase</keyword>
<keyword id="KW-0464">Manganese</keyword>
<keyword id="KW-0479">Metal-binding</keyword>
<keyword id="KW-0547">Nucleotide-binding</keyword>
<evidence type="ECO:0000255" key="1">
    <source>
        <dbReference type="HAMAP-Rule" id="MF_00453"/>
    </source>
</evidence>
<protein>
    <recommendedName>
        <fullName evidence="1">Phosphoenolpyruvate carboxykinase (ATP)</fullName>
        <shortName evidence="1">PCK</shortName>
        <shortName evidence="1">PEP carboxykinase</shortName>
        <shortName evidence="1">PEPCK</shortName>
        <ecNumber evidence="1">4.1.1.49</ecNumber>
    </recommendedName>
</protein>
<name>PCKA_BACC2</name>
<sequence length="528" mass="57951">MSTVNVQIGLHELLNGSNAQIQLSVPQLVEKVLMRNEGKLTSTGAVSASTGKYTGRSPKDKFIVKEASVADKIAWGAVNQPISEEHFNKLYTKVLEYLKEKEELFVFKGFAGADRNYRLPIQVINEYAWHNLFVHQLFIRPTEEELTTHESGFTIVSAPNFKADPAVDGTNSEAFIMVSFEKRIVLIGGTEYAGEMKKSIFSIMNFLLPEQDILSMHCSANVGEEGDVALFFGLSGTGKTTLSADPNRKLIGDDEHGWSDNGVFNIEGGCYAKCVNLSHEKEPQIFDAIKFGSVLENVIINNQTRIADYNDTTLTENTRAAYPMHAIDNIVLPSVAGHPNTIIFLTADASGVLPPISKLSKEQAMYHFLSGYTSKLAGTERGVTSPQATFSTCFGSPFLPLDASRYAEMLGEKIEKHDAKVFLVNTGWTGGEYGVGKRMNLGYTRAMIQAALSGELAKTETAKHDIFGLEVPLHVPGVPDEVLMPEQTWADKAAYKAKAIELANEFKENFKKFESVSEDIINLGGPIA</sequence>
<proteinExistence type="inferred from homology"/>
<organism>
    <name type="scientific">Bacillus cereus (strain G9842)</name>
    <dbReference type="NCBI Taxonomy" id="405531"/>
    <lineage>
        <taxon>Bacteria</taxon>
        <taxon>Bacillati</taxon>
        <taxon>Bacillota</taxon>
        <taxon>Bacilli</taxon>
        <taxon>Bacillales</taxon>
        <taxon>Bacillaceae</taxon>
        <taxon>Bacillus</taxon>
        <taxon>Bacillus cereus group</taxon>
    </lineage>
</organism>
<comment type="function">
    <text evidence="1">Involved in the gluconeogenesis. Catalyzes the conversion of oxaloacetate (OAA) to phosphoenolpyruvate (PEP) through direct phosphoryl transfer between the nucleoside triphosphate and OAA.</text>
</comment>
<comment type="catalytic activity">
    <reaction evidence="1">
        <text>oxaloacetate + ATP = phosphoenolpyruvate + ADP + CO2</text>
        <dbReference type="Rhea" id="RHEA:18617"/>
        <dbReference type="ChEBI" id="CHEBI:16452"/>
        <dbReference type="ChEBI" id="CHEBI:16526"/>
        <dbReference type="ChEBI" id="CHEBI:30616"/>
        <dbReference type="ChEBI" id="CHEBI:58702"/>
        <dbReference type="ChEBI" id="CHEBI:456216"/>
        <dbReference type="EC" id="4.1.1.49"/>
    </reaction>
</comment>
<comment type="cofactor">
    <cofactor evidence="1">
        <name>Mn(2+)</name>
        <dbReference type="ChEBI" id="CHEBI:29035"/>
    </cofactor>
    <text evidence="1">Binds 1 Mn(2+) ion per subunit.</text>
</comment>
<comment type="pathway">
    <text evidence="1">Carbohydrate biosynthesis; gluconeogenesis.</text>
</comment>
<comment type="subcellular location">
    <subcellularLocation>
        <location evidence="1">Cytoplasm</location>
    </subcellularLocation>
</comment>
<comment type="similarity">
    <text evidence="1">Belongs to the phosphoenolpyruvate carboxykinase (ATP) family.</text>
</comment>
<gene>
    <name evidence="1" type="primary">pckA</name>
    <name type="ordered locus">BCG9842_B0361</name>
</gene>
<accession>B7IL29</accession>